<accession>Q9KUM8</accession>
<organism>
    <name type="scientific">Vibrio cholerae serotype O1 (strain ATCC 39315 / El Tor Inaba N16961)</name>
    <dbReference type="NCBI Taxonomy" id="243277"/>
    <lineage>
        <taxon>Bacteria</taxon>
        <taxon>Pseudomonadati</taxon>
        <taxon>Pseudomonadota</taxon>
        <taxon>Gammaproteobacteria</taxon>
        <taxon>Vibrionales</taxon>
        <taxon>Vibrionaceae</taxon>
        <taxon>Vibrio</taxon>
    </lineage>
</organism>
<sequence>MCGIVGAVAQRDVAEILVQGLRRLEYRGYDSAGVAVVDSDKQLTRLRRLGKVQELADAVEAAQVAGGTGIAHTRWATHGEPSEINAHPHISGDITVVHNGIIENHEMLRTMLQDRGYVFTSQTDTEVIAHLVEWELRSASSLLEAVQTTVKQLTGAYGTVVMDRNDPSRLVVARSGSPIVIGFGIGENFLASDQLALLNVTRRFMYLEEGDVAEMTRRDVRVFDALGQPVQREISESNLEHDAADKGHYRHYMQKEIFEQPKALINTMEGRITHDCVVVESIGVHAAEILAKVEHVQIVACGTSYNAGMTARYWFESLAGVSCDVEIASEFRYRKFVTRPNSLLITLSQSGETADTLAALRLAKEKGYMAAMTICNVAGSSLVRESDFAFMTRAGTEIGVASTKAFTTQLVTLLMLVTALGKQQQRIGRELEAEIVHALHQLPKQIETALSFEKQIETLAEDFADKHHTLFLGRGEYYPIAVEASLKLKEISYIHAEAYAAGELKHGPLALIDADMPVVVVAPSNELLEKLKSNIEEVRARGGLLYVFADEVAGFEADETMKIIAMPHVSEIVAPIYYTIPMQLLSYHVALIKGTDVDQPRNLAKAVTVE</sequence>
<dbReference type="EC" id="2.6.1.16" evidence="1"/>
<dbReference type="EMBL" id="AE003852">
    <property type="protein sequence ID" value="AAF93660.1"/>
    <property type="molecule type" value="Genomic_DNA"/>
</dbReference>
<dbReference type="PIR" id="E82316">
    <property type="entry name" value="E82316"/>
</dbReference>
<dbReference type="RefSeq" id="NP_230141.1">
    <property type="nucleotide sequence ID" value="NC_002505.1"/>
</dbReference>
<dbReference type="RefSeq" id="WP_000334125.1">
    <property type="nucleotide sequence ID" value="NZ_LT906614.1"/>
</dbReference>
<dbReference type="SMR" id="Q9KUM8"/>
<dbReference type="STRING" id="243277.VC_0487"/>
<dbReference type="DNASU" id="2615281"/>
<dbReference type="EnsemblBacteria" id="AAF93660">
    <property type="protein sequence ID" value="AAF93660"/>
    <property type="gene ID" value="VC_0487"/>
</dbReference>
<dbReference type="KEGG" id="vch:VC_0487"/>
<dbReference type="PATRIC" id="fig|243277.26.peg.460"/>
<dbReference type="eggNOG" id="COG0449">
    <property type="taxonomic scope" value="Bacteria"/>
</dbReference>
<dbReference type="HOGENOM" id="CLU_012520_5_2_6"/>
<dbReference type="Proteomes" id="UP000000584">
    <property type="component" value="Chromosome 1"/>
</dbReference>
<dbReference type="GO" id="GO:0005829">
    <property type="term" value="C:cytosol"/>
    <property type="evidence" value="ECO:0000318"/>
    <property type="project" value="GO_Central"/>
</dbReference>
<dbReference type="GO" id="GO:0097367">
    <property type="term" value="F:carbohydrate derivative binding"/>
    <property type="evidence" value="ECO:0007669"/>
    <property type="project" value="InterPro"/>
</dbReference>
<dbReference type="GO" id="GO:0004360">
    <property type="term" value="F:glutamine-fructose-6-phosphate transaminase (isomerizing) activity"/>
    <property type="evidence" value="ECO:0000318"/>
    <property type="project" value="GO_Central"/>
</dbReference>
<dbReference type="GO" id="GO:0005975">
    <property type="term" value="P:carbohydrate metabolic process"/>
    <property type="evidence" value="ECO:0007669"/>
    <property type="project" value="UniProtKB-UniRule"/>
</dbReference>
<dbReference type="GO" id="GO:0006002">
    <property type="term" value="P:fructose 6-phosphate metabolic process"/>
    <property type="evidence" value="ECO:0000318"/>
    <property type="project" value="GO_Central"/>
</dbReference>
<dbReference type="GO" id="GO:0006487">
    <property type="term" value="P:protein N-linked glycosylation"/>
    <property type="evidence" value="ECO:0000318"/>
    <property type="project" value="GO_Central"/>
</dbReference>
<dbReference type="GO" id="GO:0006047">
    <property type="term" value="P:UDP-N-acetylglucosamine metabolic process"/>
    <property type="evidence" value="ECO:0000318"/>
    <property type="project" value="GO_Central"/>
</dbReference>
<dbReference type="CDD" id="cd00714">
    <property type="entry name" value="GFAT"/>
    <property type="match status" value="1"/>
</dbReference>
<dbReference type="CDD" id="cd05008">
    <property type="entry name" value="SIS_GlmS_GlmD_1"/>
    <property type="match status" value="1"/>
</dbReference>
<dbReference type="CDD" id="cd05009">
    <property type="entry name" value="SIS_GlmS_GlmD_2"/>
    <property type="match status" value="1"/>
</dbReference>
<dbReference type="FunFam" id="3.40.50.10490:FF:000001">
    <property type="entry name" value="Glutamine--fructose-6-phosphate aminotransferase [isomerizing]"/>
    <property type="match status" value="1"/>
</dbReference>
<dbReference type="FunFam" id="3.40.50.10490:FF:000002">
    <property type="entry name" value="Glutamine--fructose-6-phosphate aminotransferase [isomerizing]"/>
    <property type="match status" value="1"/>
</dbReference>
<dbReference type="FunFam" id="3.60.20.10:FF:000006">
    <property type="entry name" value="Glutamine--fructose-6-phosphate aminotransferase [isomerizing]"/>
    <property type="match status" value="1"/>
</dbReference>
<dbReference type="Gene3D" id="3.40.50.10490">
    <property type="entry name" value="Glucose-6-phosphate isomerase like protein, domain 1"/>
    <property type="match status" value="2"/>
</dbReference>
<dbReference type="Gene3D" id="3.60.20.10">
    <property type="entry name" value="Glutamine Phosphoribosylpyrophosphate, subunit 1, domain 1"/>
    <property type="match status" value="1"/>
</dbReference>
<dbReference type="HAMAP" id="MF_00164">
    <property type="entry name" value="GlmS"/>
    <property type="match status" value="1"/>
</dbReference>
<dbReference type="InterPro" id="IPR017932">
    <property type="entry name" value="GATase_2_dom"/>
</dbReference>
<dbReference type="InterPro" id="IPR005855">
    <property type="entry name" value="GFAT"/>
</dbReference>
<dbReference type="InterPro" id="IPR047084">
    <property type="entry name" value="GFAT_N"/>
</dbReference>
<dbReference type="InterPro" id="IPR035466">
    <property type="entry name" value="GlmS/AgaS_SIS"/>
</dbReference>
<dbReference type="InterPro" id="IPR035490">
    <property type="entry name" value="GlmS/FrlB_SIS"/>
</dbReference>
<dbReference type="InterPro" id="IPR029055">
    <property type="entry name" value="Ntn_hydrolases_N"/>
</dbReference>
<dbReference type="InterPro" id="IPR001347">
    <property type="entry name" value="SIS_dom"/>
</dbReference>
<dbReference type="InterPro" id="IPR046348">
    <property type="entry name" value="SIS_dom_sf"/>
</dbReference>
<dbReference type="NCBIfam" id="TIGR01135">
    <property type="entry name" value="glmS"/>
    <property type="match status" value="1"/>
</dbReference>
<dbReference type="NCBIfam" id="NF001484">
    <property type="entry name" value="PRK00331.1"/>
    <property type="match status" value="1"/>
</dbReference>
<dbReference type="PANTHER" id="PTHR10937">
    <property type="entry name" value="GLUCOSAMINE--FRUCTOSE-6-PHOSPHATE AMINOTRANSFERASE, ISOMERIZING"/>
    <property type="match status" value="1"/>
</dbReference>
<dbReference type="PANTHER" id="PTHR10937:SF0">
    <property type="entry name" value="GLUTAMINE--FRUCTOSE-6-PHOSPHATE TRANSAMINASE (ISOMERIZING)"/>
    <property type="match status" value="1"/>
</dbReference>
<dbReference type="Pfam" id="PF13522">
    <property type="entry name" value="GATase_6"/>
    <property type="match status" value="1"/>
</dbReference>
<dbReference type="Pfam" id="PF01380">
    <property type="entry name" value="SIS"/>
    <property type="match status" value="2"/>
</dbReference>
<dbReference type="SUPFAM" id="SSF56235">
    <property type="entry name" value="N-terminal nucleophile aminohydrolases (Ntn hydrolases)"/>
    <property type="match status" value="1"/>
</dbReference>
<dbReference type="SUPFAM" id="SSF53697">
    <property type="entry name" value="SIS domain"/>
    <property type="match status" value="1"/>
</dbReference>
<dbReference type="PROSITE" id="PS51278">
    <property type="entry name" value="GATASE_TYPE_2"/>
    <property type="match status" value="1"/>
</dbReference>
<dbReference type="PROSITE" id="PS51464">
    <property type="entry name" value="SIS"/>
    <property type="match status" value="2"/>
</dbReference>
<keyword id="KW-0032">Aminotransferase</keyword>
<keyword id="KW-0963">Cytoplasm</keyword>
<keyword id="KW-0315">Glutamine amidotransferase</keyword>
<keyword id="KW-1185">Reference proteome</keyword>
<keyword id="KW-0677">Repeat</keyword>
<keyword id="KW-0808">Transferase</keyword>
<reference key="1">
    <citation type="journal article" date="2000" name="Nature">
        <title>DNA sequence of both chromosomes of the cholera pathogen Vibrio cholerae.</title>
        <authorList>
            <person name="Heidelberg J.F."/>
            <person name="Eisen J.A."/>
            <person name="Nelson W.C."/>
            <person name="Clayton R.A."/>
            <person name="Gwinn M.L."/>
            <person name="Dodson R.J."/>
            <person name="Haft D.H."/>
            <person name="Hickey E.K."/>
            <person name="Peterson J.D."/>
            <person name="Umayam L.A."/>
            <person name="Gill S.R."/>
            <person name="Nelson K.E."/>
            <person name="Read T.D."/>
            <person name="Tettelin H."/>
            <person name="Richardson D.L."/>
            <person name="Ermolaeva M.D."/>
            <person name="Vamathevan J.J."/>
            <person name="Bass S."/>
            <person name="Qin H."/>
            <person name="Dragoi I."/>
            <person name="Sellers P."/>
            <person name="McDonald L.A."/>
            <person name="Utterback T.R."/>
            <person name="Fleischmann R.D."/>
            <person name="Nierman W.C."/>
            <person name="White O."/>
            <person name="Salzberg S.L."/>
            <person name="Smith H.O."/>
            <person name="Colwell R.R."/>
            <person name="Mekalanos J.J."/>
            <person name="Venter J.C."/>
            <person name="Fraser C.M."/>
        </authorList>
    </citation>
    <scope>NUCLEOTIDE SEQUENCE [LARGE SCALE GENOMIC DNA]</scope>
    <source>
        <strain>ATCC 39315 / El Tor Inaba N16961</strain>
    </source>
</reference>
<feature type="initiator methionine" description="Removed" evidence="1">
    <location>
        <position position="1"/>
    </location>
</feature>
<feature type="chain" id="PRO_0000135408" description="Glutamine--fructose-6-phosphate aminotransferase [isomerizing]">
    <location>
        <begin position="2"/>
        <end position="610"/>
    </location>
</feature>
<feature type="domain" description="Glutamine amidotransferase type-2" evidence="1">
    <location>
        <begin position="2"/>
        <end position="218"/>
    </location>
</feature>
<feature type="domain" description="SIS 1" evidence="1">
    <location>
        <begin position="286"/>
        <end position="426"/>
    </location>
</feature>
<feature type="domain" description="SIS 2" evidence="1">
    <location>
        <begin position="459"/>
        <end position="600"/>
    </location>
</feature>
<feature type="active site" description="Nucleophile; for GATase activity" evidence="1">
    <location>
        <position position="2"/>
    </location>
</feature>
<feature type="active site" description="For Fru-6P isomerization activity" evidence="1">
    <location>
        <position position="605"/>
    </location>
</feature>
<gene>
    <name evidence="1" type="primary">glmS</name>
    <name type="ordered locus">VC_0487</name>
</gene>
<comment type="function">
    <text evidence="1">Catalyzes the first step in hexosamine metabolism, converting fructose-6P into glucosamine-6P using glutamine as a nitrogen source.</text>
</comment>
<comment type="catalytic activity">
    <reaction evidence="1">
        <text>D-fructose 6-phosphate + L-glutamine = D-glucosamine 6-phosphate + L-glutamate</text>
        <dbReference type="Rhea" id="RHEA:13237"/>
        <dbReference type="ChEBI" id="CHEBI:29985"/>
        <dbReference type="ChEBI" id="CHEBI:58359"/>
        <dbReference type="ChEBI" id="CHEBI:58725"/>
        <dbReference type="ChEBI" id="CHEBI:61527"/>
        <dbReference type="EC" id="2.6.1.16"/>
    </reaction>
</comment>
<comment type="subunit">
    <text evidence="1">Homodimer.</text>
</comment>
<comment type="subcellular location">
    <subcellularLocation>
        <location evidence="1">Cytoplasm</location>
    </subcellularLocation>
</comment>
<protein>
    <recommendedName>
        <fullName evidence="1">Glutamine--fructose-6-phosphate aminotransferase [isomerizing]</fullName>
        <ecNumber evidence="1">2.6.1.16</ecNumber>
    </recommendedName>
    <alternativeName>
        <fullName evidence="1">D-fructose-6-phosphate amidotransferase</fullName>
    </alternativeName>
    <alternativeName>
        <fullName evidence="1">GFAT</fullName>
    </alternativeName>
    <alternativeName>
        <fullName evidence="1">Glucosamine-6-phosphate synthase</fullName>
    </alternativeName>
    <alternativeName>
        <fullName evidence="1">Hexosephosphate aminotransferase</fullName>
    </alternativeName>
    <alternativeName>
        <fullName evidence="1">L-glutamine--D-fructose-6-phosphate amidotransferase</fullName>
    </alternativeName>
</protein>
<name>GLMS_VIBCH</name>
<evidence type="ECO:0000255" key="1">
    <source>
        <dbReference type="HAMAP-Rule" id="MF_00164"/>
    </source>
</evidence>
<proteinExistence type="inferred from homology"/>